<organism>
    <name type="scientific">Escherichia coli O6:K15:H31 (strain 536 / UPEC)</name>
    <dbReference type="NCBI Taxonomy" id="362663"/>
    <lineage>
        <taxon>Bacteria</taxon>
        <taxon>Pseudomonadati</taxon>
        <taxon>Pseudomonadota</taxon>
        <taxon>Gammaproteobacteria</taxon>
        <taxon>Enterobacterales</taxon>
        <taxon>Enterobacteriaceae</taxon>
        <taxon>Escherichia</taxon>
    </lineage>
</organism>
<dbReference type="EC" id="7.3.2.1" evidence="2"/>
<dbReference type="EMBL" id="CP000247">
    <property type="protein sequence ID" value="ABG71895.1"/>
    <property type="molecule type" value="Genomic_DNA"/>
</dbReference>
<dbReference type="RefSeq" id="WP_000063125.1">
    <property type="nucleotide sequence ID" value="NC_008253.1"/>
</dbReference>
<dbReference type="SMR" id="Q0TAY4"/>
<dbReference type="GeneID" id="93778212"/>
<dbReference type="KEGG" id="ecp:ECP_3924"/>
<dbReference type="HOGENOM" id="CLU_000604_1_22_6"/>
<dbReference type="Proteomes" id="UP000009182">
    <property type="component" value="Chromosome"/>
</dbReference>
<dbReference type="GO" id="GO:0005886">
    <property type="term" value="C:plasma membrane"/>
    <property type="evidence" value="ECO:0007669"/>
    <property type="project" value="UniProtKB-SubCell"/>
</dbReference>
<dbReference type="GO" id="GO:0005524">
    <property type="term" value="F:ATP binding"/>
    <property type="evidence" value="ECO:0007669"/>
    <property type="project" value="UniProtKB-KW"/>
</dbReference>
<dbReference type="GO" id="GO:0016887">
    <property type="term" value="F:ATP hydrolysis activity"/>
    <property type="evidence" value="ECO:0007669"/>
    <property type="project" value="InterPro"/>
</dbReference>
<dbReference type="GO" id="GO:0015415">
    <property type="term" value="F:ATPase-coupled phosphate ion transmembrane transporter activity"/>
    <property type="evidence" value="ECO:0007669"/>
    <property type="project" value="UniProtKB-EC"/>
</dbReference>
<dbReference type="GO" id="GO:0035435">
    <property type="term" value="P:phosphate ion transmembrane transport"/>
    <property type="evidence" value="ECO:0007669"/>
    <property type="project" value="InterPro"/>
</dbReference>
<dbReference type="CDD" id="cd03260">
    <property type="entry name" value="ABC_PstB_phosphate_transporter"/>
    <property type="match status" value="1"/>
</dbReference>
<dbReference type="FunFam" id="3.40.50.300:FF:000132">
    <property type="entry name" value="Phosphate import ATP-binding protein PstB"/>
    <property type="match status" value="1"/>
</dbReference>
<dbReference type="Gene3D" id="3.40.50.300">
    <property type="entry name" value="P-loop containing nucleotide triphosphate hydrolases"/>
    <property type="match status" value="1"/>
</dbReference>
<dbReference type="InterPro" id="IPR003593">
    <property type="entry name" value="AAA+_ATPase"/>
</dbReference>
<dbReference type="InterPro" id="IPR003439">
    <property type="entry name" value="ABC_transporter-like_ATP-bd"/>
</dbReference>
<dbReference type="InterPro" id="IPR017871">
    <property type="entry name" value="ABC_transporter-like_CS"/>
</dbReference>
<dbReference type="InterPro" id="IPR027417">
    <property type="entry name" value="P-loop_NTPase"/>
</dbReference>
<dbReference type="InterPro" id="IPR005670">
    <property type="entry name" value="PstB-like"/>
</dbReference>
<dbReference type="NCBIfam" id="TIGR00972">
    <property type="entry name" value="3a0107s01c2"/>
    <property type="match status" value="1"/>
</dbReference>
<dbReference type="PANTHER" id="PTHR43423">
    <property type="entry name" value="ABC TRANSPORTER I FAMILY MEMBER 17"/>
    <property type="match status" value="1"/>
</dbReference>
<dbReference type="PANTHER" id="PTHR43423:SF3">
    <property type="entry name" value="PHOSPHATE IMPORT ATP-BINDING PROTEIN PSTB"/>
    <property type="match status" value="1"/>
</dbReference>
<dbReference type="Pfam" id="PF00005">
    <property type="entry name" value="ABC_tran"/>
    <property type="match status" value="1"/>
</dbReference>
<dbReference type="SMART" id="SM00382">
    <property type="entry name" value="AAA"/>
    <property type="match status" value="1"/>
</dbReference>
<dbReference type="SUPFAM" id="SSF52540">
    <property type="entry name" value="P-loop containing nucleoside triphosphate hydrolases"/>
    <property type="match status" value="1"/>
</dbReference>
<dbReference type="PROSITE" id="PS00211">
    <property type="entry name" value="ABC_TRANSPORTER_1"/>
    <property type="match status" value="1"/>
</dbReference>
<dbReference type="PROSITE" id="PS50893">
    <property type="entry name" value="ABC_TRANSPORTER_2"/>
    <property type="match status" value="1"/>
</dbReference>
<dbReference type="PROSITE" id="PS51238">
    <property type="entry name" value="PSTB"/>
    <property type="match status" value="1"/>
</dbReference>
<gene>
    <name evidence="2" type="primary">pstB</name>
    <name type="ordered locus">ECP_3924</name>
</gene>
<protein>
    <recommendedName>
        <fullName evidence="2">Phosphate import ATP-binding protein PstB</fullName>
        <ecNumber evidence="2">7.3.2.1</ecNumber>
    </recommendedName>
    <alternativeName>
        <fullName evidence="2">ABC phosphate transporter</fullName>
    </alternativeName>
    <alternativeName>
        <fullName evidence="2">Phosphate-transporting ATPase</fullName>
    </alternativeName>
</protein>
<keyword id="KW-0067">ATP-binding</keyword>
<keyword id="KW-0997">Cell inner membrane</keyword>
<keyword id="KW-1003">Cell membrane</keyword>
<keyword id="KW-0472">Membrane</keyword>
<keyword id="KW-0547">Nucleotide-binding</keyword>
<keyword id="KW-0592">Phosphate transport</keyword>
<keyword id="KW-1278">Translocase</keyword>
<keyword id="KW-0813">Transport</keyword>
<reference key="1">
    <citation type="journal article" date="2006" name="Mol. Microbiol.">
        <title>Role of pathogenicity island-associated integrases in the genome plasticity of uropathogenic Escherichia coli strain 536.</title>
        <authorList>
            <person name="Hochhut B."/>
            <person name="Wilde C."/>
            <person name="Balling G."/>
            <person name="Middendorf B."/>
            <person name="Dobrindt U."/>
            <person name="Brzuszkiewicz E."/>
            <person name="Gottschalk G."/>
            <person name="Carniel E."/>
            <person name="Hacker J."/>
        </authorList>
    </citation>
    <scope>NUCLEOTIDE SEQUENCE [LARGE SCALE GENOMIC DNA]</scope>
    <source>
        <strain>536 / UPEC</strain>
    </source>
</reference>
<comment type="function">
    <text evidence="2">Part of the ABC transporter complex PstSACB involved in phosphate import. Responsible for energy coupling to the transport system.</text>
</comment>
<comment type="catalytic activity">
    <reaction evidence="2">
        <text>phosphate(out) + ATP + H2O = ADP + 2 phosphate(in) + H(+)</text>
        <dbReference type="Rhea" id="RHEA:24440"/>
        <dbReference type="ChEBI" id="CHEBI:15377"/>
        <dbReference type="ChEBI" id="CHEBI:15378"/>
        <dbReference type="ChEBI" id="CHEBI:30616"/>
        <dbReference type="ChEBI" id="CHEBI:43474"/>
        <dbReference type="ChEBI" id="CHEBI:456216"/>
        <dbReference type="EC" id="7.3.2.1"/>
    </reaction>
</comment>
<comment type="subunit">
    <text evidence="2">The complex is composed of two ATP-binding proteins (PstB), two transmembrane proteins (PstC and PstA) and a solute-binding protein (PstS).</text>
</comment>
<comment type="subcellular location">
    <subcellularLocation>
        <location evidence="2">Cell inner membrane</location>
        <topology evidence="2">Peripheral membrane protein</topology>
    </subcellularLocation>
</comment>
<comment type="similarity">
    <text evidence="2">Belongs to the ABC transporter superfamily. Phosphate importer (TC 3.A.1.7) family.</text>
</comment>
<feature type="initiator methionine" description="Removed" evidence="1">
    <location>
        <position position="1"/>
    </location>
</feature>
<feature type="chain" id="PRO_0000272453" description="Phosphate import ATP-binding protein PstB">
    <location>
        <begin position="2"/>
        <end position="257"/>
    </location>
</feature>
<feature type="domain" description="ABC transporter" evidence="2">
    <location>
        <begin position="11"/>
        <end position="252"/>
    </location>
</feature>
<feature type="binding site" evidence="2">
    <location>
        <begin position="43"/>
        <end position="50"/>
    </location>
    <ligand>
        <name>ATP</name>
        <dbReference type="ChEBI" id="CHEBI:30616"/>
    </ligand>
</feature>
<evidence type="ECO:0000250" key="1"/>
<evidence type="ECO:0000255" key="2">
    <source>
        <dbReference type="HAMAP-Rule" id="MF_01702"/>
    </source>
</evidence>
<name>PSTB_ECOL5</name>
<sequence length="257" mass="29027">MSMVETAPSKIQVRNLNFYYGKFHALKNINLDIAKNQVTAFIGPSGCGKSTLLRTFNKMFELYPEQRAEGEILLDGDNILTNSQDIALLRAKVGMVFQKPTPFPMSIYDNIAFGVRLFEKLSRADMDERVQWALTKAALWNETKDKLHQSGYSLSGGQQQRLCIARGIAIRPEVLLLDEPCSALDPISTGRIEELITELKQDYTVVIVTHNMQQAARCSDHTAFMYLGELIEFSNTDDLFTKPAKKQTEDYITGRYG</sequence>
<proteinExistence type="inferred from homology"/>
<accession>Q0TAY4</accession>